<gene>
    <name evidence="5 10" type="primary">IGKV1-33</name>
</gene>
<proteinExistence type="evidence at protein level"/>
<sequence>MDMRVPAQLLGLLLLWLSGARCDIQMTQSPSSLSASVGDRVTITCQASQDISNYLNWYQQKPGKAPKLLIYDASNLETGVPSRFSGSGSGTDFTFTISSLQPEDIATYYCQQYDNLP</sequence>
<reference key="1">
    <citation type="journal article" date="2005" name="Nature">
        <title>Generation and annotation of the DNA sequences of human chromosomes 2 and 4.</title>
        <authorList>
            <person name="Hillier L.W."/>
            <person name="Graves T.A."/>
            <person name="Fulton R.S."/>
            <person name="Fulton L.A."/>
            <person name="Pepin K.H."/>
            <person name="Minx P."/>
            <person name="Wagner-McPherson C."/>
            <person name="Layman D."/>
            <person name="Wylie K."/>
            <person name="Sekhon M."/>
            <person name="Becker M.C."/>
            <person name="Fewell G.A."/>
            <person name="Delehaunty K.D."/>
            <person name="Miner T.L."/>
            <person name="Nash W.E."/>
            <person name="Kremitzki C."/>
            <person name="Oddy L."/>
            <person name="Du H."/>
            <person name="Sun H."/>
            <person name="Bradshaw-Cordum H."/>
            <person name="Ali J."/>
            <person name="Carter J."/>
            <person name="Cordes M."/>
            <person name="Harris A."/>
            <person name="Isak A."/>
            <person name="van Brunt A."/>
            <person name="Nguyen C."/>
            <person name="Du F."/>
            <person name="Courtney L."/>
            <person name="Kalicki J."/>
            <person name="Ozersky P."/>
            <person name="Abbott S."/>
            <person name="Armstrong J."/>
            <person name="Belter E.A."/>
            <person name="Caruso L."/>
            <person name="Cedroni M."/>
            <person name="Cotton M."/>
            <person name="Davidson T."/>
            <person name="Desai A."/>
            <person name="Elliott G."/>
            <person name="Erb T."/>
            <person name="Fronick C."/>
            <person name="Gaige T."/>
            <person name="Haakenson W."/>
            <person name="Haglund K."/>
            <person name="Holmes A."/>
            <person name="Harkins R."/>
            <person name="Kim K."/>
            <person name="Kruchowski S.S."/>
            <person name="Strong C.M."/>
            <person name="Grewal N."/>
            <person name="Goyea E."/>
            <person name="Hou S."/>
            <person name="Levy A."/>
            <person name="Martinka S."/>
            <person name="Mead K."/>
            <person name="McLellan M.D."/>
            <person name="Meyer R."/>
            <person name="Randall-Maher J."/>
            <person name="Tomlinson C."/>
            <person name="Dauphin-Kohlberg S."/>
            <person name="Kozlowicz-Reilly A."/>
            <person name="Shah N."/>
            <person name="Swearengen-Shahid S."/>
            <person name="Snider J."/>
            <person name="Strong J.T."/>
            <person name="Thompson J."/>
            <person name="Yoakum M."/>
            <person name="Leonard S."/>
            <person name="Pearman C."/>
            <person name="Trani L."/>
            <person name="Radionenko M."/>
            <person name="Waligorski J.E."/>
            <person name="Wang C."/>
            <person name="Rock S.M."/>
            <person name="Tin-Wollam A.-M."/>
            <person name="Maupin R."/>
            <person name="Latreille P."/>
            <person name="Wendl M.C."/>
            <person name="Yang S.-P."/>
            <person name="Pohl C."/>
            <person name="Wallis J.W."/>
            <person name="Spieth J."/>
            <person name="Bieri T.A."/>
            <person name="Berkowicz N."/>
            <person name="Nelson J.O."/>
            <person name="Osborne J."/>
            <person name="Ding L."/>
            <person name="Meyer R."/>
            <person name="Sabo A."/>
            <person name="Shotland Y."/>
            <person name="Sinha P."/>
            <person name="Wohldmann P.E."/>
            <person name="Cook L.L."/>
            <person name="Hickenbotham M.T."/>
            <person name="Eldred J."/>
            <person name="Williams D."/>
            <person name="Jones T.A."/>
            <person name="She X."/>
            <person name="Ciccarelli F.D."/>
            <person name="Izaurralde E."/>
            <person name="Taylor J."/>
            <person name="Schmutz J."/>
            <person name="Myers R.M."/>
            <person name="Cox D.R."/>
            <person name="Huang X."/>
            <person name="McPherson J.D."/>
            <person name="Mardis E.R."/>
            <person name="Clifton S.W."/>
            <person name="Warren W.C."/>
            <person name="Chinwalla A.T."/>
            <person name="Eddy S.R."/>
            <person name="Marra M.A."/>
            <person name="Ovcharenko I."/>
            <person name="Furey T.S."/>
            <person name="Miller W."/>
            <person name="Eichler E.E."/>
            <person name="Bork P."/>
            <person name="Suyama M."/>
            <person name="Torrents D."/>
            <person name="Waterston R.H."/>
            <person name="Wilson R.K."/>
        </authorList>
    </citation>
    <scope>NUCLEOTIDE SEQUENCE [LARGE SCALE GENOMIC DNA] (IMGT ALLELE IGKV1-33*01)</scope>
</reference>
<reference key="2">
    <citation type="journal article" date="1972" name="Hoppe-Seyler's Z. Physiol. Chem.">
        <title>Rule of antibody structure. The primary structure of a monoclonal immunoglobulin L-chain of the kappa-type, subgroup I (Bence-Jones protein Au).</title>
        <authorList>
            <person name="Schiechl H."/>
            <person name="Hilschmann N."/>
        </authorList>
    </citation>
    <scope>PROTEIN SEQUENCE OF 23-117</scope>
</reference>
<reference key="3">
    <citation type="journal article" date="1975" name="J. Biochem.">
        <title>Comparative structural studies on the light chains of human immunoglobulins. I. Protein Ka with the Inv(3) allotypic marker.</title>
        <authorList>
            <person name="Shinoda T."/>
        </authorList>
    </citation>
    <scope>PROTEIN SEQUENCE OF 23-117</scope>
</reference>
<reference key="4">
    <citation type="journal article" date="2001" name="Exp. Clin. Immunogenet.">
        <title>Nomenclature of the human immunoglobulin kappa (IGK) genes.</title>
        <authorList>
            <person name="Lefranc M.P."/>
        </authorList>
    </citation>
    <scope>NOMEMCLATURE</scope>
</reference>
<reference key="5">
    <citation type="book" date="2001" name="The Immunoglobulin FactsBook.">
        <title>The Immunoglobulin FactsBook.</title>
        <editorList>
            <person name="Lefranc M.P."/>
            <person name="Lefranc G."/>
        </editorList>
        <authorList>
            <person name="Lefranc M.P."/>
            <person name="Lefranc G."/>
        </authorList>
    </citation>
    <scope>NOMENCLATURE</scope>
</reference>
<reference key="6">
    <citation type="journal article" date="2007" name="Annu. Rev. Genet.">
        <title>Immunoglobulin somatic hypermutation.</title>
        <authorList>
            <person name="Teng G."/>
            <person name="Papavasiliou F.N."/>
        </authorList>
    </citation>
    <scope>REVIEW ON SOMATIC HYPERMUTATION</scope>
</reference>
<reference key="7">
    <citation type="journal article" date="2010" name="J. Allergy Clin. Immunol.">
        <title>Structure and function of immunoglobulins.</title>
        <authorList>
            <person name="Schroeder H.W. Jr."/>
            <person name="Cavacini L."/>
        </authorList>
    </citation>
    <scope>REVIEW ON IMMUNOGLOBULINS</scope>
</reference>
<reference key="8">
    <citation type="journal article" date="2012" name="Nat. Rev. Immunol.">
        <title>Molecular programming of B cell memory.</title>
        <authorList>
            <person name="McHeyzer-Williams M."/>
            <person name="Okitsu S."/>
            <person name="Wang N."/>
            <person name="McHeyzer-Williams L."/>
        </authorList>
    </citation>
    <scope>REVIEW ON FUNCTION</scope>
</reference>
<reference key="9">
    <citation type="journal article" date="2014" name="Front. Immunol.">
        <title>Immunoglobulin and T Cell Receptor Genes: IMGT((R)) and the Birth and Rise of Immunoinformatics.</title>
        <authorList>
            <person name="Lefranc M.P."/>
        </authorList>
    </citation>
    <scope>NOMENCLATURE</scope>
</reference>
<reference key="10">
    <citation type="journal article" date="1975" name="Biophys. Struct. Mech.">
        <title>The structure determination of the variable portion of the Bence-Jones protein Au.</title>
        <authorList>
            <person name="Fehlhammer H."/>
            <person name="Schiffer M."/>
            <person name="Epp O."/>
            <person name="Colman P.M."/>
            <person name="Lattman E.E."/>
            <person name="Schwager P."/>
            <person name="Steigemann W."/>
            <person name="Schramm H.J."/>
        </authorList>
    </citation>
    <scope>X-RAY CRYSTALLOGRAPHY (2.2 ANGSTROMS) OF 23-117</scope>
</reference>
<evidence type="ECO:0000250" key="1">
    <source>
        <dbReference type="UniProtKB" id="P01602"/>
    </source>
</evidence>
<evidence type="ECO:0000255" key="2"/>
<evidence type="ECO:0000255" key="3">
    <source>
        <dbReference type="PROSITE-ProRule" id="PRU00114"/>
    </source>
</evidence>
<evidence type="ECO:0000269" key="4">
    <source>
    </source>
</evidence>
<evidence type="ECO:0000303" key="5">
    <source>
    </source>
</evidence>
<evidence type="ECO:0000303" key="6">
    <source>
    </source>
</evidence>
<evidence type="ECO:0000303" key="7">
    <source>
    </source>
</evidence>
<evidence type="ECO:0000303" key="8">
    <source>
    </source>
</evidence>
<evidence type="ECO:0000303" key="9">
    <source>
    </source>
</evidence>
<evidence type="ECO:0000303" key="10">
    <source ref="5"/>
</evidence>
<evidence type="ECO:0000305" key="11"/>
<evidence type="ECO:0000305" key="12">
    <source>
    </source>
</evidence>
<evidence type="ECO:0000305" key="13">
    <source>
    </source>
</evidence>
<evidence type="ECO:0007829" key="14">
    <source>
        <dbReference type="PDB" id="2Q20"/>
    </source>
</evidence>
<evidence type="ECO:0007829" key="15">
    <source>
        <dbReference type="PDB" id="7CZQ"/>
    </source>
</evidence>
<accession>P01594</accession>
<accession>A0A087WZH9</accession>
<accession>P01603</accession>
<keyword id="KW-0002">3D-structure</keyword>
<keyword id="KW-1064">Adaptive immunity</keyword>
<keyword id="KW-0086">Bence-Jones protein</keyword>
<keyword id="KW-1003">Cell membrane</keyword>
<keyword id="KW-0903">Direct protein sequencing</keyword>
<keyword id="KW-1015">Disulfide bond</keyword>
<keyword id="KW-0391">Immunity</keyword>
<keyword id="KW-1280">Immunoglobulin</keyword>
<keyword id="KW-0393">Immunoglobulin domain</keyword>
<keyword id="KW-0472">Membrane</keyword>
<keyword id="KW-1185">Reference proteome</keyword>
<keyword id="KW-0964">Secreted</keyword>
<keyword id="KW-0732">Signal</keyword>
<dbReference type="EMBL" id="AC244255">
    <property type="status" value="NOT_ANNOTATED_CDS"/>
    <property type="molecule type" value="Genomic_DNA"/>
</dbReference>
<dbReference type="PIR" id="A01869">
    <property type="entry name" value="K1HUKA"/>
</dbReference>
<dbReference type="PIR" id="A91653">
    <property type="entry name" value="K1HUAU"/>
</dbReference>
<dbReference type="PIR" id="S42265">
    <property type="entry name" value="S42265"/>
</dbReference>
<dbReference type="PDB" id="1B0W">
    <property type="method" value="X-ray"/>
    <property type="resolution" value="1.80 A"/>
    <property type="chains" value="A/B/C=23-117"/>
</dbReference>
<dbReference type="PDB" id="1JV5">
    <property type="method" value="X-ray"/>
    <property type="resolution" value="2.20 A"/>
    <property type="chains" value="A=23-117"/>
</dbReference>
<dbReference type="PDB" id="1QP1">
    <property type="method" value="X-ray"/>
    <property type="resolution" value="2.06 A"/>
    <property type="chains" value="A/B/C=23-117"/>
</dbReference>
<dbReference type="PDB" id="2Q20">
    <property type="method" value="X-ray"/>
    <property type="resolution" value="1.30 A"/>
    <property type="chains" value="A/B=23-117"/>
</dbReference>
<dbReference type="PDB" id="3CDC">
    <property type="method" value="X-ray"/>
    <property type="resolution" value="1.53 A"/>
    <property type="chains" value="A/B=23-117"/>
</dbReference>
<dbReference type="PDB" id="3CDF">
    <property type="method" value="X-ray"/>
    <property type="resolution" value="1.53 A"/>
    <property type="chains" value="A/B/C/D/E/F=23-117"/>
</dbReference>
<dbReference type="PDB" id="3CDY">
    <property type="method" value="X-ray"/>
    <property type="resolution" value="2.43 A"/>
    <property type="chains" value="A/B=23-117"/>
</dbReference>
<dbReference type="PDB" id="4K07">
    <property type="method" value="X-ray"/>
    <property type="resolution" value="2.83 A"/>
    <property type="chains" value="A/B/C/D/E/F/G/H/I/J=20-117"/>
</dbReference>
<dbReference type="PDB" id="7CZQ">
    <property type="method" value="EM"/>
    <property type="resolution" value="2.80 A"/>
    <property type="chains" value="K/N=24-117"/>
</dbReference>
<dbReference type="PDB" id="7CZU">
    <property type="method" value="EM"/>
    <property type="resolution" value="3.40 A"/>
    <property type="chains" value="K/N=24-117"/>
</dbReference>
<dbReference type="PDB" id="7CZV">
    <property type="method" value="EM"/>
    <property type="resolution" value="3.30 A"/>
    <property type="chains" value="K/M/N=24-117"/>
</dbReference>
<dbReference type="PDBsum" id="1B0W"/>
<dbReference type="PDBsum" id="1JV5"/>
<dbReference type="PDBsum" id="1QP1"/>
<dbReference type="PDBsum" id="2Q20"/>
<dbReference type="PDBsum" id="3CDC"/>
<dbReference type="PDBsum" id="3CDF"/>
<dbReference type="PDBsum" id="3CDY"/>
<dbReference type="PDBsum" id="4K07"/>
<dbReference type="PDBsum" id="7CZQ"/>
<dbReference type="PDBsum" id="7CZU"/>
<dbReference type="PDBsum" id="7CZV"/>
<dbReference type="SMR" id="P01594"/>
<dbReference type="DIP" id="DIP-58572N"/>
<dbReference type="FunCoup" id="P01594">
    <property type="interactions" value="371"/>
</dbReference>
<dbReference type="IntAct" id="P01594">
    <property type="interactions" value="5"/>
</dbReference>
<dbReference type="MINT" id="P01594"/>
<dbReference type="STRING" id="9606.ENSP00000479032"/>
<dbReference type="IMGT_GENE-DB" id="IGKV1-33"/>
<dbReference type="BioMuta" id="IGKV1-33"/>
<dbReference type="DMDM" id="125767"/>
<dbReference type="jPOST" id="P01594"/>
<dbReference type="MassIVE" id="P01594"/>
<dbReference type="Ensembl" id="ENST00000473726.1">
    <property type="protein sequence ID" value="ENSP00000420020.1"/>
    <property type="gene ID" value="ENSG00000242076.3"/>
</dbReference>
<dbReference type="Ensembl" id="ENST00000632835.1">
    <property type="protein sequence ID" value="ENSP00000487732.1"/>
    <property type="gene ID" value="ENSG00000282811.1"/>
</dbReference>
<dbReference type="UCSC" id="uc061lra.1">
    <property type="organism name" value="human"/>
</dbReference>
<dbReference type="AGR" id="HGNC:5737"/>
<dbReference type="GeneCards" id="IGKV1-33"/>
<dbReference type="HGNC" id="HGNC:5737">
    <property type="gene designation" value="IGKV1-33"/>
</dbReference>
<dbReference type="HPA" id="ENSG00000242076">
    <property type="expression patterns" value="Tissue enhanced (lymphoid tissue, stomach)"/>
</dbReference>
<dbReference type="neXtProt" id="NX_P01594"/>
<dbReference type="VEuPathDB" id="HostDB:ENSG00000242076"/>
<dbReference type="GeneTree" id="ENSGT00940000162515"/>
<dbReference type="InParanoid" id="P01594"/>
<dbReference type="OrthoDB" id="9629570at2759"/>
<dbReference type="PAN-GO" id="P01594">
    <property type="GO annotations" value="3 GO annotations based on evolutionary models"/>
</dbReference>
<dbReference type="PhylomeDB" id="P01594"/>
<dbReference type="PathwayCommons" id="P01594"/>
<dbReference type="Reactome" id="R-HSA-166663">
    <property type="pathway name" value="Initial triggering of complement"/>
</dbReference>
<dbReference type="Reactome" id="R-HSA-173623">
    <property type="pathway name" value="Classical antibody-mediated complement activation"/>
</dbReference>
<dbReference type="Reactome" id="R-HSA-198933">
    <property type="pathway name" value="Immunoregulatory interactions between a Lymphoid and a non-Lymphoid cell"/>
</dbReference>
<dbReference type="Reactome" id="R-HSA-202733">
    <property type="pathway name" value="Cell surface interactions at the vascular wall"/>
</dbReference>
<dbReference type="Reactome" id="R-HSA-2029481">
    <property type="pathway name" value="FCGR activation"/>
</dbReference>
<dbReference type="Reactome" id="R-HSA-2029482">
    <property type="pathway name" value="Regulation of actin dynamics for phagocytic cup formation"/>
</dbReference>
<dbReference type="Reactome" id="R-HSA-2029485">
    <property type="pathway name" value="Role of phospholipids in phagocytosis"/>
</dbReference>
<dbReference type="Reactome" id="R-HSA-2168880">
    <property type="pathway name" value="Scavenging of heme from plasma"/>
</dbReference>
<dbReference type="Reactome" id="R-HSA-2454202">
    <property type="pathway name" value="Fc epsilon receptor (FCERI) signaling"/>
</dbReference>
<dbReference type="Reactome" id="R-HSA-2730905">
    <property type="pathway name" value="Role of LAT2/NTAL/LAB on calcium mobilization"/>
</dbReference>
<dbReference type="Reactome" id="R-HSA-2871796">
    <property type="pathway name" value="FCERI mediated MAPK activation"/>
</dbReference>
<dbReference type="Reactome" id="R-HSA-2871809">
    <property type="pathway name" value="FCERI mediated Ca+2 mobilization"/>
</dbReference>
<dbReference type="Reactome" id="R-HSA-2871837">
    <property type="pathway name" value="FCERI mediated NF-kB activation"/>
</dbReference>
<dbReference type="Reactome" id="R-HSA-5690714">
    <property type="pathway name" value="CD22 mediated BCR regulation"/>
</dbReference>
<dbReference type="Reactome" id="R-HSA-9664323">
    <property type="pathway name" value="FCGR3A-mediated IL10 synthesis"/>
</dbReference>
<dbReference type="Reactome" id="R-HSA-9664422">
    <property type="pathway name" value="FCGR3A-mediated phagocytosis"/>
</dbReference>
<dbReference type="Reactome" id="R-HSA-9679191">
    <property type="pathway name" value="Potential therapeutics for SARS"/>
</dbReference>
<dbReference type="Reactome" id="R-HSA-977606">
    <property type="pathway name" value="Regulation of Complement cascade"/>
</dbReference>
<dbReference type="Reactome" id="R-HSA-983695">
    <property type="pathway name" value="Antigen activates B Cell Receptor (BCR) leading to generation of second messengers"/>
</dbReference>
<dbReference type="SignaLink" id="P01594"/>
<dbReference type="ChiTaRS" id="IGKV1-33">
    <property type="organism name" value="human"/>
</dbReference>
<dbReference type="EvolutionaryTrace" id="P01594"/>
<dbReference type="Pharos" id="P01594">
    <property type="development level" value="Tdark"/>
</dbReference>
<dbReference type="PRO" id="PR:P01594"/>
<dbReference type="Proteomes" id="UP000005640">
    <property type="component" value="Chromosome 2"/>
</dbReference>
<dbReference type="RNAct" id="P01594">
    <property type="molecule type" value="protein"/>
</dbReference>
<dbReference type="Bgee" id="ENSG00000242076">
    <property type="expression patterns" value="Expressed in rectum and 89 other cell types or tissues"/>
</dbReference>
<dbReference type="GO" id="GO:0072562">
    <property type="term" value="C:blood microparticle"/>
    <property type="evidence" value="ECO:0007005"/>
    <property type="project" value="UniProtKB"/>
</dbReference>
<dbReference type="GO" id="GO:0005576">
    <property type="term" value="C:extracellular region"/>
    <property type="evidence" value="ECO:0000304"/>
    <property type="project" value="Reactome"/>
</dbReference>
<dbReference type="GO" id="GO:0019814">
    <property type="term" value="C:immunoglobulin complex"/>
    <property type="evidence" value="ECO:0000318"/>
    <property type="project" value="GO_Central"/>
</dbReference>
<dbReference type="GO" id="GO:0005886">
    <property type="term" value="C:plasma membrane"/>
    <property type="evidence" value="ECO:0000304"/>
    <property type="project" value="Reactome"/>
</dbReference>
<dbReference type="GO" id="GO:0003823">
    <property type="term" value="F:antigen binding"/>
    <property type="evidence" value="ECO:0000303"/>
    <property type="project" value="UniProtKB"/>
</dbReference>
<dbReference type="GO" id="GO:0042802">
    <property type="term" value="F:identical protein binding"/>
    <property type="evidence" value="ECO:0000353"/>
    <property type="project" value="IntAct"/>
</dbReference>
<dbReference type="GO" id="GO:0002250">
    <property type="term" value="P:adaptive immune response"/>
    <property type="evidence" value="ECO:0007669"/>
    <property type="project" value="UniProtKB-KW"/>
</dbReference>
<dbReference type="GO" id="GO:0006955">
    <property type="term" value="P:immune response"/>
    <property type="evidence" value="ECO:0000318"/>
    <property type="project" value="GO_Central"/>
</dbReference>
<dbReference type="CDD" id="cd04980">
    <property type="entry name" value="IgV_L_kappa"/>
    <property type="match status" value="1"/>
</dbReference>
<dbReference type="FunFam" id="2.60.40.10:FF:000212">
    <property type="entry name" value="Immunoglobulin kappa chain variable 12-38"/>
    <property type="match status" value="1"/>
</dbReference>
<dbReference type="Gene3D" id="2.60.40.10">
    <property type="entry name" value="Immunoglobulins"/>
    <property type="match status" value="1"/>
</dbReference>
<dbReference type="InterPro" id="IPR007110">
    <property type="entry name" value="Ig-like_dom"/>
</dbReference>
<dbReference type="InterPro" id="IPR036179">
    <property type="entry name" value="Ig-like_dom_sf"/>
</dbReference>
<dbReference type="InterPro" id="IPR013783">
    <property type="entry name" value="Ig-like_fold"/>
</dbReference>
<dbReference type="InterPro" id="IPR003599">
    <property type="entry name" value="Ig_sub"/>
</dbReference>
<dbReference type="InterPro" id="IPR013106">
    <property type="entry name" value="Ig_V-set"/>
</dbReference>
<dbReference type="InterPro" id="IPR050150">
    <property type="entry name" value="IgV_Light_Chain"/>
</dbReference>
<dbReference type="PANTHER" id="PTHR23267">
    <property type="entry name" value="IMMUNOGLOBULIN LIGHT CHAIN"/>
    <property type="match status" value="1"/>
</dbReference>
<dbReference type="Pfam" id="PF07686">
    <property type="entry name" value="V-set"/>
    <property type="match status" value="1"/>
</dbReference>
<dbReference type="SMART" id="SM00409">
    <property type="entry name" value="IG"/>
    <property type="match status" value="1"/>
</dbReference>
<dbReference type="SMART" id="SM00406">
    <property type="entry name" value="IGv"/>
    <property type="match status" value="1"/>
</dbReference>
<dbReference type="SUPFAM" id="SSF48726">
    <property type="entry name" value="Immunoglobulin"/>
    <property type="match status" value="1"/>
</dbReference>
<dbReference type="PROSITE" id="PS50835">
    <property type="entry name" value="IG_LIKE"/>
    <property type="match status" value="1"/>
</dbReference>
<organism>
    <name type="scientific">Homo sapiens</name>
    <name type="common">Human</name>
    <dbReference type="NCBI Taxonomy" id="9606"/>
    <lineage>
        <taxon>Eukaryota</taxon>
        <taxon>Metazoa</taxon>
        <taxon>Chordata</taxon>
        <taxon>Craniata</taxon>
        <taxon>Vertebrata</taxon>
        <taxon>Euteleostomi</taxon>
        <taxon>Mammalia</taxon>
        <taxon>Eutheria</taxon>
        <taxon>Euarchontoglires</taxon>
        <taxon>Primates</taxon>
        <taxon>Haplorrhini</taxon>
        <taxon>Catarrhini</taxon>
        <taxon>Hominidae</taxon>
        <taxon>Homo</taxon>
    </lineage>
</organism>
<name>KV133_HUMAN</name>
<comment type="function">
    <text evidence="6 7 8 9">V region of the variable domain of immunoglobulin light chains that participates in the antigen recognition (PubMed:24600447). Immunoglobulins, also known as antibodies, are membrane-bound or secreted glycoproteins produced by B lymphocytes. In the recognition phase of humoral immunity, the membrane-bound immunoglobulins serve as receptors which, upon binding of a specific antigen, trigger the clonal expansion and differentiation of B lymphocytes into immunoglobulins-secreting plasma cells. Secreted immunoglobulins mediate the effector phase of humoral immunity, which results in the elimination of bound antigens (PubMed:20176268, PubMed:22158414). The antigen binding site is formed by the variable domain of one heavy chain, together with that of its associated light chain. Thus, each immunoglobulin has two antigen binding sites with remarkable affinity for a particular antigen. The variable domains are assembled by a process called V-(D)-J rearrangement and can then be subjected to somatic hypermutations which, after exposure to antigen and selection, allow affinity maturation for a particular antigen (PubMed:17576170, PubMed:20176268).</text>
</comment>
<comment type="subunit">
    <text evidence="7">Immunoglobulins are composed of two identical heavy chains and two identical light chains; disulfide-linked.</text>
</comment>
<comment type="interaction">
    <interactant intactId="EBI-15853604">
        <id>P01594</id>
    </interactant>
    <interactant intactId="EBI-15853604">
        <id>P01594</id>
        <label>IGKV1-33</label>
    </interactant>
    <organismsDiffer>false</organismsDiffer>
    <experiments>3</experiments>
</comment>
<comment type="subcellular location">
    <subcellularLocation>
        <location evidence="7 8">Secreted</location>
    </subcellularLocation>
    <subcellularLocation>
        <location evidence="7 8">Cell membrane</location>
    </subcellularLocation>
</comment>
<comment type="polymorphism">
    <text>There are several alleles. The sequence shown is that of IMGT allele IGKV1-33*01.</text>
</comment>
<comment type="caution">
    <text evidence="11">For an example of a full-length immunoglobulin kappa light chain see AC P0DOX7.</text>
</comment>
<feature type="signal peptide" evidence="4">
    <location>
        <begin position="1"/>
        <end position="22"/>
    </location>
</feature>
<feature type="chain" id="PRO_0000059738" description="Immunoglobulin kappa variable 1-33" evidence="2">
    <location>
        <begin position="23"/>
        <end position="117"/>
    </location>
</feature>
<feature type="domain" description="Ig-like" evidence="3">
    <location>
        <begin position="24"/>
        <end position="117" status="greater than"/>
    </location>
</feature>
<feature type="region of interest" description="Framework-1" evidence="1">
    <location>
        <begin position="23"/>
        <end position="45"/>
    </location>
</feature>
<feature type="region of interest" description="Complementarity-determining-1" evidence="1">
    <location>
        <begin position="46"/>
        <end position="56"/>
    </location>
</feature>
<feature type="region of interest" description="Framework-2" evidence="1">
    <location>
        <begin position="57"/>
        <end position="71"/>
    </location>
</feature>
<feature type="region of interest" description="Complementarity-determining-2" evidence="1">
    <location>
        <begin position="72"/>
        <end position="78"/>
    </location>
</feature>
<feature type="region of interest" description="Framework-3" evidence="1">
    <location>
        <begin position="79"/>
        <end position="110"/>
    </location>
</feature>
<feature type="region of interest" description="Complementarity-determining-3" evidence="1">
    <location>
        <begin position="111"/>
        <end position="117" status="greater than"/>
    </location>
</feature>
<feature type="disulfide bond" evidence="3">
    <location>
        <begin position="45"/>
        <end position="110"/>
    </location>
</feature>
<feature type="sequence conflict" description="In Ref. 3; AA sequence." evidence="11" ref="3">
    <original>S</original>
    <variation>T</variation>
    <location>
        <position position="32"/>
    </location>
</feature>
<feature type="sequence conflict" description="In Ref. 3; AA sequence." evidence="11" ref="3">
    <original>A</original>
    <variation>V</variation>
    <location>
        <position position="35"/>
    </location>
</feature>
<feature type="sequence conflict" description="In Ref. 3; AA sequence." evidence="11" ref="3">
    <original>Q</original>
    <variation>E</variation>
    <location>
        <position position="46"/>
    </location>
</feature>
<feature type="sequence conflict" description="In Ref. 3; AA sequence." evidence="11" ref="3">
    <original>DISN</original>
    <variation>TVLS</variation>
    <location>
        <begin position="50"/>
        <end position="53"/>
    </location>
</feature>
<feature type="sequence conflict" description="In Ref. 2; AA sequence." evidence="11" ref="2">
    <original>N</original>
    <variation>D</variation>
    <location>
        <position position="53"/>
    </location>
</feature>
<feature type="sequence conflict" description="In Ref. 3; AA sequence." evidence="11" ref="3">
    <original>D</original>
    <variation>A</variation>
    <location>
        <position position="72"/>
    </location>
</feature>
<feature type="sequence conflict" description="In Ref. 3; AA sequence." evidence="11" ref="3">
    <original>N</original>
    <variation>S</variation>
    <location>
        <position position="75"/>
    </location>
</feature>
<feature type="sequence conflict" description="In Ref. 2; AA sequence." evidence="11" ref="2">
    <original>T</original>
    <variation>S</variation>
    <location>
        <position position="78"/>
    </location>
</feature>
<feature type="sequence conflict" description="In Ref. 2; AA sequence." evidence="11" ref="2">
    <original>S</original>
    <variation>G</variation>
    <location>
        <position position="87"/>
    </location>
</feature>
<feature type="sequence conflict" description="In Ref. 3; AA sequence." evidence="11" ref="3">
    <original>S</original>
    <variation>Q</variation>
    <location>
        <position position="87"/>
    </location>
</feature>
<feature type="sequence conflict" description="In Ref. 2; AA sequence." evidence="11" ref="2">
    <original>TD</original>
    <variation>AH</variation>
    <location>
        <begin position="91"/>
        <end position="92"/>
    </location>
</feature>
<feature type="sequence conflict" description="In Ref. 3; AA sequence." evidence="11" ref="3">
    <original>L</original>
    <variation>V</variation>
    <location>
        <position position="100"/>
    </location>
</feature>
<feature type="sequence conflict" description="In Ref. 3; AA sequence." evidence="11" ref="3">
    <original>I</original>
    <variation>F</variation>
    <location>
        <position position="105"/>
    </location>
</feature>
<feature type="sequence conflict" description="In Ref. 3; AA sequence." evidence="11" ref="3">
    <original>DN</original>
    <variation>LD</variation>
    <location>
        <begin position="114"/>
        <end position="115"/>
    </location>
</feature>
<feature type="sequence conflict" description="In Ref. 2; AA sequence." evidence="11" ref="2">
    <original>N</original>
    <variation>Y</variation>
    <location>
        <position position="115"/>
    </location>
</feature>
<feature type="non-terminal residue">
    <location>
        <position position="117"/>
    </location>
</feature>
<feature type="strand" evidence="14">
    <location>
        <begin position="26"/>
        <end position="29"/>
    </location>
</feature>
<feature type="strand" evidence="14">
    <location>
        <begin position="31"/>
        <end position="35"/>
    </location>
</feature>
<feature type="strand" evidence="14">
    <location>
        <begin position="41"/>
        <end position="49"/>
    </location>
</feature>
<feature type="strand" evidence="14">
    <location>
        <begin position="55"/>
        <end position="60"/>
    </location>
</feature>
<feature type="strand" evidence="15">
    <location>
        <begin position="62"/>
        <end position="64"/>
    </location>
</feature>
<feature type="strand" evidence="14">
    <location>
        <begin position="66"/>
        <end position="71"/>
    </location>
</feature>
<feature type="turn" evidence="14">
    <location>
        <begin position="72"/>
        <end position="74"/>
    </location>
</feature>
<feature type="strand" evidence="14">
    <location>
        <begin position="84"/>
        <end position="89"/>
    </location>
</feature>
<feature type="strand" evidence="14">
    <location>
        <begin position="92"/>
        <end position="99"/>
    </location>
</feature>
<feature type="helix" evidence="14">
    <location>
        <begin position="102"/>
        <end position="104"/>
    </location>
</feature>
<feature type="strand" evidence="14">
    <location>
        <begin position="106"/>
        <end position="112"/>
    </location>
</feature>
<feature type="strand" evidence="14">
    <location>
        <begin position="114"/>
        <end position="117"/>
    </location>
</feature>
<protein>
    <recommendedName>
        <fullName evidence="5 10">Immunoglobulin kappa variable 1-33</fullName>
    </recommendedName>
    <alternativeName>
        <fullName evidence="12">Ig kappa chain V-I region AU</fullName>
    </alternativeName>
    <alternativeName>
        <fullName evidence="13">Ig kappa chain V-I region Ka</fullName>
    </alternativeName>
</protein>